<proteinExistence type="inferred from homology"/>
<name>OBG_ACICJ</name>
<reference key="1">
    <citation type="submission" date="2007-05" db="EMBL/GenBank/DDBJ databases">
        <title>Complete sequence of chromosome of Acidiphilium cryptum JF-5.</title>
        <authorList>
            <consortium name="US DOE Joint Genome Institute"/>
            <person name="Copeland A."/>
            <person name="Lucas S."/>
            <person name="Lapidus A."/>
            <person name="Barry K."/>
            <person name="Detter J.C."/>
            <person name="Glavina del Rio T."/>
            <person name="Hammon N."/>
            <person name="Israni S."/>
            <person name="Dalin E."/>
            <person name="Tice H."/>
            <person name="Pitluck S."/>
            <person name="Sims D."/>
            <person name="Brettin T."/>
            <person name="Bruce D."/>
            <person name="Han C."/>
            <person name="Schmutz J."/>
            <person name="Larimer F."/>
            <person name="Land M."/>
            <person name="Hauser L."/>
            <person name="Kyrpides N."/>
            <person name="Kim E."/>
            <person name="Magnuson T."/>
            <person name="Richardson P."/>
        </authorList>
    </citation>
    <scope>NUCLEOTIDE SEQUENCE [LARGE SCALE GENOMIC DNA]</scope>
    <source>
        <strain>JF-5</strain>
    </source>
</reference>
<feature type="chain" id="PRO_0000385657" description="GTPase Obg">
    <location>
        <begin position="1"/>
        <end position="332"/>
    </location>
</feature>
<feature type="domain" description="Obg" evidence="2">
    <location>
        <begin position="1"/>
        <end position="159"/>
    </location>
</feature>
<feature type="domain" description="OBG-type G" evidence="1">
    <location>
        <begin position="160"/>
        <end position="328"/>
    </location>
</feature>
<feature type="binding site" evidence="1">
    <location>
        <begin position="166"/>
        <end position="173"/>
    </location>
    <ligand>
        <name>GTP</name>
        <dbReference type="ChEBI" id="CHEBI:37565"/>
    </ligand>
</feature>
<feature type="binding site" evidence="1">
    <location>
        <position position="173"/>
    </location>
    <ligand>
        <name>Mg(2+)</name>
        <dbReference type="ChEBI" id="CHEBI:18420"/>
    </ligand>
</feature>
<feature type="binding site" evidence="1">
    <location>
        <begin position="191"/>
        <end position="195"/>
    </location>
    <ligand>
        <name>GTP</name>
        <dbReference type="ChEBI" id="CHEBI:37565"/>
    </ligand>
</feature>
<feature type="binding site" evidence="1">
    <location>
        <position position="193"/>
    </location>
    <ligand>
        <name>Mg(2+)</name>
        <dbReference type="ChEBI" id="CHEBI:18420"/>
    </ligand>
</feature>
<feature type="binding site" evidence="1">
    <location>
        <begin position="213"/>
        <end position="216"/>
    </location>
    <ligand>
        <name>GTP</name>
        <dbReference type="ChEBI" id="CHEBI:37565"/>
    </ligand>
</feature>
<feature type="binding site" evidence="1">
    <location>
        <begin position="280"/>
        <end position="283"/>
    </location>
    <ligand>
        <name>GTP</name>
        <dbReference type="ChEBI" id="CHEBI:37565"/>
    </ligand>
</feature>
<feature type="binding site" evidence="1">
    <location>
        <begin position="309"/>
        <end position="311"/>
    </location>
    <ligand>
        <name>GTP</name>
        <dbReference type="ChEBI" id="CHEBI:37565"/>
    </ligand>
</feature>
<protein>
    <recommendedName>
        <fullName evidence="1">GTPase Obg</fullName>
        <ecNumber evidence="1">3.6.5.-</ecNumber>
    </recommendedName>
    <alternativeName>
        <fullName evidence="1">GTP-binding protein Obg</fullName>
    </alternativeName>
</protein>
<comment type="function">
    <text evidence="1">An essential GTPase which binds GTP, GDP and possibly (p)ppGpp with moderate affinity, with high nucleotide exchange rates and a fairly low GTP hydrolysis rate. Plays a role in control of the cell cycle, stress response, ribosome biogenesis and in those bacteria that undergo differentiation, in morphogenesis control.</text>
</comment>
<comment type="cofactor">
    <cofactor evidence="1">
        <name>Mg(2+)</name>
        <dbReference type="ChEBI" id="CHEBI:18420"/>
    </cofactor>
</comment>
<comment type="subunit">
    <text evidence="1">Monomer.</text>
</comment>
<comment type="subcellular location">
    <subcellularLocation>
        <location evidence="1">Cytoplasm</location>
    </subcellularLocation>
</comment>
<comment type="similarity">
    <text evidence="1">Belongs to the TRAFAC class OBG-HflX-like GTPase superfamily. OBG GTPase family.</text>
</comment>
<dbReference type="EC" id="3.6.5.-" evidence="1"/>
<dbReference type="EMBL" id="CP000697">
    <property type="protein sequence ID" value="ABQ29461.1"/>
    <property type="molecule type" value="Genomic_DNA"/>
</dbReference>
<dbReference type="SMR" id="A5FV29"/>
<dbReference type="STRING" id="349163.Acry_0233"/>
<dbReference type="KEGG" id="acr:Acry_0233"/>
<dbReference type="eggNOG" id="COG0536">
    <property type="taxonomic scope" value="Bacteria"/>
</dbReference>
<dbReference type="HOGENOM" id="CLU_011747_2_0_5"/>
<dbReference type="Proteomes" id="UP000000245">
    <property type="component" value="Chromosome"/>
</dbReference>
<dbReference type="GO" id="GO:0005737">
    <property type="term" value="C:cytoplasm"/>
    <property type="evidence" value="ECO:0007669"/>
    <property type="project" value="UniProtKB-SubCell"/>
</dbReference>
<dbReference type="GO" id="GO:0005525">
    <property type="term" value="F:GTP binding"/>
    <property type="evidence" value="ECO:0007669"/>
    <property type="project" value="UniProtKB-UniRule"/>
</dbReference>
<dbReference type="GO" id="GO:0003924">
    <property type="term" value="F:GTPase activity"/>
    <property type="evidence" value="ECO:0007669"/>
    <property type="project" value="UniProtKB-UniRule"/>
</dbReference>
<dbReference type="GO" id="GO:0000287">
    <property type="term" value="F:magnesium ion binding"/>
    <property type="evidence" value="ECO:0007669"/>
    <property type="project" value="InterPro"/>
</dbReference>
<dbReference type="GO" id="GO:0042254">
    <property type="term" value="P:ribosome biogenesis"/>
    <property type="evidence" value="ECO:0007669"/>
    <property type="project" value="UniProtKB-UniRule"/>
</dbReference>
<dbReference type="CDD" id="cd01898">
    <property type="entry name" value="Obg"/>
    <property type="match status" value="1"/>
</dbReference>
<dbReference type="FunFam" id="2.70.210.12:FF:000001">
    <property type="entry name" value="GTPase Obg"/>
    <property type="match status" value="1"/>
</dbReference>
<dbReference type="Gene3D" id="2.70.210.12">
    <property type="entry name" value="GTP1/OBG domain"/>
    <property type="match status" value="1"/>
</dbReference>
<dbReference type="Gene3D" id="3.40.50.300">
    <property type="entry name" value="P-loop containing nucleotide triphosphate hydrolases"/>
    <property type="match status" value="1"/>
</dbReference>
<dbReference type="HAMAP" id="MF_01454">
    <property type="entry name" value="GTPase_Obg"/>
    <property type="match status" value="1"/>
</dbReference>
<dbReference type="InterPro" id="IPR031167">
    <property type="entry name" value="G_OBG"/>
</dbReference>
<dbReference type="InterPro" id="IPR006073">
    <property type="entry name" value="GTP-bd"/>
</dbReference>
<dbReference type="InterPro" id="IPR014100">
    <property type="entry name" value="GTP-bd_Obg/CgtA"/>
</dbReference>
<dbReference type="InterPro" id="IPR006074">
    <property type="entry name" value="GTP1-OBG_CS"/>
</dbReference>
<dbReference type="InterPro" id="IPR006169">
    <property type="entry name" value="GTP1_OBG_dom"/>
</dbReference>
<dbReference type="InterPro" id="IPR036726">
    <property type="entry name" value="GTP1_OBG_dom_sf"/>
</dbReference>
<dbReference type="InterPro" id="IPR045086">
    <property type="entry name" value="OBG_GTPase"/>
</dbReference>
<dbReference type="InterPro" id="IPR027417">
    <property type="entry name" value="P-loop_NTPase"/>
</dbReference>
<dbReference type="NCBIfam" id="TIGR02729">
    <property type="entry name" value="Obg_CgtA"/>
    <property type="match status" value="1"/>
</dbReference>
<dbReference type="NCBIfam" id="NF008955">
    <property type="entry name" value="PRK12297.1"/>
    <property type="match status" value="1"/>
</dbReference>
<dbReference type="NCBIfam" id="NF008956">
    <property type="entry name" value="PRK12299.1"/>
    <property type="match status" value="1"/>
</dbReference>
<dbReference type="PANTHER" id="PTHR11702">
    <property type="entry name" value="DEVELOPMENTALLY REGULATED GTP-BINDING PROTEIN-RELATED"/>
    <property type="match status" value="1"/>
</dbReference>
<dbReference type="PANTHER" id="PTHR11702:SF31">
    <property type="entry name" value="MITOCHONDRIAL RIBOSOME-ASSOCIATED GTPASE 2"/>
    <property type="match status" value="1"/>
</dbReference>
<dbReference type="Pfam" id="PF01018">
    <property type="entry name" value="GTP1_OBG"/>
    <property type="match status" value="1"/>
</dbReference>
<dbReference type="Pfam" id="PF01926">
    <property type="entry name" value="MMR_HSR1"/>
    <property type="match status" value="1"/>
</dbReference>
<dbReference type="PIRSF" id="PIRSF002401">
    <property type="entry name" value="GTP_bd_Obg/CgtA"/>
    <property type="match status" value="1"/>
</dbReference>
<dbReference type="PRINTS" id="PR00326">
    <property type="entry name" value="GTP1OBG"/>
</dbReference>
<dbReference type="SUPFAM" id="SSF82051">
    <property type="entry name" value="Obg GTP-binding protein N-terminal domain"/>
    <property type="match status" value="1"/>
</dbReference>
<dbReference type="SUPFAM" id="SSF52540">
    <property type="entry name" value="P-loop containing nucleoside triphosphate hydrolases"/>
    <property type="match status" value="1"/>
</dbReference>
<dbReference type="PROSITE" id="PS51710">
    <property type="entry name" value="G_OBG"/>
    <property type="match status" value="1"/>
</dbReference>
<dbReference type="PROSITE" id="PS00905">
    <property type="entry name" value="GTP1_OBG"/>
    <property type="match status" value="1"/>
</dbReference>
<dbReference type="PROSITE" id="PS51883">
    <property type="entry name" value="OBG"/>
    <property type="match status" value="1"/>
</dbReference>
<organism>
    <name type="scientific">Acidiphilium cryptum (strain JF-5)</name>
    <dbReference type="NCBI Taxonomy" id="349163"/>
    <lineage>
        <taxon>Bacteria</taxon>
        <taxon>Pseudomonadati</taxon>
        <taxon>Pseudomonadota</taxon>
        <taxon>Alphaproteobacteria</taxon>
        <taxon>Acetobacterales</taxon>
        <taxon>Acidocellaceae</taxon>
        <taxon>Acidiphilium</taxon>
    </lineage>
</organism>
<sequence length="332" mass="35560">MKFLDQAKIYVRSGDGGNGVVAFRREKYIEFGGPDGGNGGRGGDIVFEAVENLNTLIDFRYTQHFRARKGGNGAGSDRTGAAAPPVVIKVPVGTQILDDDRETLLADLDAPGKRIVLLRGGDGGHGNAMFKTSTNRAPRRADPGWPGEERWVWLRLKLIADAGLVGLPNAGKSTFLSVASAARPKIADYPFTTLHPQLGVVRLSMTEEFVLADIPGLIEGAHDGAGLGDRFLGHVERCAALIHLIDGAAGDVVDAWRTIRGELEAYGGGLADKPELIVLNKMDAMTPHQIAGRRSALERASGCKVMVISAAAHQGVDAVLRETLRMIREQRQ</sequence>
<gene>
    <name evidence="1" type="primary">obg</name>
    <name type="ordered locus">Acry_0233</name>
</gene>
<evidence type="ECO:0000255" key="1">
    <source>
        <dbReference type="HAMAP-Rule" id="MF_01454"/>
    </source>
</evidence>
<evidence type="ECO:0000255" key="2">
    <source>
        <dbReference type="PROSITE-ProRule" id="PRU01231"/>
    </source>
</evidence>
<accession>A5FV29</accession>
<keyword id="KW-0963">Cytoplasm</keyword>
<keyword id="KW-0342">GTP-binding</keyword>
<keyword id="KW-0378">Hydrolase</keyword>
<keyword id="KW-0460">Magnesium</keyword>
<keyword id="KW-0479">Metal-binding</keyword>
<keyword id="KW-0547">Nucleotide-binding</keyword>
<keyword id="KW-1185">Reference proteome</keyword>